<evidence type="ECO:0000255" key="1">
    <source>
        <dbReference type="HAMAP-Rule" id="MF_01134"/>
    </source>
</evidence>
<feature type="chain" id="PRO_0000155097" description="Acetyl-CoA decarbonylase/synthase complex subunit epsilon">
    <location>
        <begin position="1"/>
        <end position="173"/>
    </location>
</feature>
<organism>
    <name type="scientific">Methanothermobacter thermautotrophicus (strain ATCC 29096 / DSM 1053 / JCM 10044 / NBRC 100330 / Delta H)</name>
    <name type="common">Methanobacterium thermoautotrophicum</name>
    <dbReference type="NCBI Taxonomy" id="187420"/>
    <lineage>
        <taxon>Archaea</taxon>
        <taxon>Methanobacteriati</taxon>
        <taxon>Methanobacteriota</taxon>
        <taxon>Methanomada group</taxon>
        <taxon>Methanobacteria</taxon>
        <taxon>Methanobacteriales</taxon>
        <taxon>Methanobacteriaceae</taxon>
        <taxon>Methanothermobacter</taxon>
    </lineage>
</organism>
<proteinExistence type="inferred from homology"/>
<name>ACDE_METTH</name>
<sequence>MIVLNDRIIPWQPTVIAGPKQAMLVTPETATMMIKKARRPLMVVGPLAKRQEVLEHTVKIIRHFDLPVVATADTYRALSEAGIESEPHGIVEITNLLKDPSWEGIRGEGQHDLVIFIGCIYYIASQGLSSLKHFAPHIKTLTICKTFHSNADASFPNMDDDEWFRYLEKMYAE</sequence>
<accession>O27744</accession>
<protein>
    <recommendedName>
        <fullName evidence="1">Acetyl-CoA decarbonylase/synthase complex subunit epsilon</fullName>
        <shortName evidence="1">ACDS complex subunit epsilon</shortName>
    </recommendedName>
    <alternativeName>
        <fullName evidence="1">ACDS complex carbon monoxide dehydrogenase subunit epsilon</fullName>
        <shortName evidence="1">ACDS CODH subunit epsilon</shortName>
    </alternativeName>
</protein>
<comment type="function">
    <text evidence="1">Part of a complex that catalyzes the reversible cleavage of acetyl-CoA, allowing growth on acetate as sole source of carbon and energy. The alpha-epsilon subcomponent functions as a carbon monoxide dehydrogenase. The precise role of the epsilon subunit is unclear; it may have a stabilizing role within the alpha(2)epsilon(2) component and/or be involved in electron transfer to FAD during a potential FAD-mediated CO oxidation.</text>
</comment>
<comment type="pathway">
    <text evidence="1">One-carbon metabolism; methanogenesis from acetate.</text>
</comment>
<comment type="subunit">
    <text evidence="1">Heterotetramer of two alpha and two epsilon subunits. The ACDS complex is made up of alpha, epsilon, beta, gamma and delta subunits with a probable stoichiometry of (alpha(2)epsilon(2))(4)-beta(8)-(gamma(1)delta(1))(8).</text>
</comment>
<comment type="similarity">
    <text evidence="1">Belongs to the CdhB family.</text>
</comment>
<gene>
    <name evidence="1" type="primary">cdhB</name>
    <name type="ordered locus">MTH_1709</name>
</gene>
<dbReference type="EMBL" id="AE000666">
    <property type="protein sequence ID" value="AAB86181.1"/>
    <property type="molecule type" value="Genomic_DNA"/>
</dbReference>
<dbReference type="PIR" id="F69095">
    <property type="entry name" value="F69095"/>
</dbReference>
<dbReference type="SMR" id="O27744"/>
<dbReference type="FunCoup" id="O27744">
    <property type="interactions" value="66"/>
</dbReference>
<dbReference type="STRING" id="187420.MTH_1709"/>
<dbReference type="PaxDb" id="187420-MTH_1709"/>
<dbReference type="EnsemblBacteria" id="AAB86181">
    <property type="protein sequence ID" value="AAB86181"/>
    <property type="gene ID" value="MTH_1709"/>
</dbReference>
<dbReference type="KEGG" id="mth:MTH_1709"/>
<dbReference type="PATRIC" id="fig|187420.15.peg.1670"/>
<dbReference type="HOGENOM" id="CLU_123700_0_0_2"/>
<dbReference type="InParanoid" id="O27744"/>
<dbReference type="UniPathway" id="UPA00642"/>
<dbReference type="Proteomes" id="UP000005223">
    <property type="component" value="Chromosome"/>
</dbReference>
<dbReference type="GO" id="GO:0019385">
    <property type="term" value="P:methanogenesis, from acetate"/>
    <property type="evidence" value="ECO:0007669"/>
    <property type="project" value="UniProtKB-UniPathway"/>
</dbReference>
<dbReference type="Gene3D" id="3.40.50.1220">
    <property type="entry name" value="TPP-binding domain"/>
    <property type="match status" value="1"/>
</dbReference>
<dbReference type="HAMAP" id="MF_01134">
    <property type="entry name" value="CdhB"/>
    <property type="match status" value="1"/>
</dbReference>
<dbReference type="InterPro" id="IPR003704">
    <property type="entry name" value="CdhB"/>
</dbReference>
<dbReference type="InterPro" id="IPR029035">
    <property type="entry name" value="DHS-like_NAD/FAD-binding_dom"/>
</dbReference>
<dbReference type="NCBIfam" id="TIGR00315">
    <property type="entry name" value="cdhB"/>
    <property type="match status" value="1"/>
</dbReference>
<dbReference type="Pfam" id="PF02552">
    <property type="entry name" value="CO_dh"/>
    <property type="match status" value="1"/>
</dbReference>
<dbReference type="PIRSF" id="PIRSF006035">
    <property type="entry name" value="CO_dh_b_ACDS_e"/>
    <property type="match status" value="1"/>
</dbReference>
<dbReference type="SUPFAM" id="SSF52467">
    <property type="entry name" value="DHS-like NAD/FAD-binding domain"/>
    <property type="match status" value="1"/>
</dbReference>
<keyword id="KW-1185">Reference proteome</keyword>
<reference key="1">
    <citation type="journal article" date="1997" name="J. Bacteriol.">
        <title>Complete genome sequence of Methanobacterium thermoautotrophicum deltaH: functional analysis and comparative genomics.</title>
        <authorList>
            <person name="Smith D.R."/>
            <person name="Doucette-Stamm L.A."/>
            <person name="Deloughery C."/>
            <person name="Lee H.-M."/>
            <person name="Dubois J."/>
            <person name="Aldredge T."/>
            <person name="Bashirzadeh R."/>
            <person name="Blakely D."/>
            <person name="Cook R."/>
            <person name="Gilbert K."/>
            <person name="Harrison D."/>
            <person name="Hoang L."/>
            <person name="Keagle P."/>
            <person name="Lumm W."/>
            <person name="Pothier B."/>
            <person name="Qiu D."/>
            <person name="Spadafora R."/>
            <person name="Vicare R."/>
            <person name="Wang Y."/>
            <person name="Wierzbowski J."/>
            <person name="Gibson R."/>
            <person name="Jiwani N."/>
            <person name="Caruso A."/>
            <person name="Bush D."/>
            <person name="Safer H."/>
            <person name="Patwell D."/>
            <person name="Prabhakar S."/>
            <person name="McDougall S."/>
            <person name="Shimer G."/>
            <person name="Goyal A."/>
            <person name="Pietrovski S."/>
            <person name="Church G.M."/>
            <person name="Daniels C.J."/>
            <person name="Mao J.-I."/>
            <person name="Rice P."/>
            <person name="Noelling J."/>
            <person name="Reeve J.N."/>
        </authorList>
    </citation>
    <scope>NUCLEOTIDE SEQUENCE [LARGE SCALE GENOMIC DNA]</scope>
    <source>
        <strain>ATCC 29096 / DSM 1053 / JCM 10044 / NBRC 100330 / Delta H</strain>
    </source>
</reference>